<proteinExistence type="inferred from homology"/>
<gene>
    <name evidence="1" type="primary">rsmH</name>
    <name type="synonym">mraW</name>
    <name type="ordered locus">OB1462</name>
</gene>
<name>RSMH_OCEIH</name>
<reference key="1">
    <citation type="journal article" date="2002" name="Nucleic Acids Res.">
        <title>Genome sequence of Oceanobacillus iheyensis isolated from the Iheya Ridge and its unexpected adaptive capabilities to extreme environments.</title>
        <authorList>
            <person name="Takami H."/>
            <person name="Takaki Y."/>
            <person name="Uchiyama I."/>
        </authorList>
    </citation>
    <scope>NUCLEOTIDE SEQUENCE [LARGE SCALE GENOMIC DNA]</scope>
    <source>
        <strain>DSM 14371 / CIP 107618 / JCM 11309 / KCTC 3954 / HTE831</strain>
    </source>
</reference>
<dbReference type="EC" id="2.1.1.199" evidence="1"/>
<dbReference type="EMBL" id="BA000028">
    <property type="protein sequence ID" value="BAC13418.1"/>
    <property type="status" value="ALT_INIT"/>
    <property type="molecule type" value="Genomic_DNA"/>
</dbReference>
<dbReference type="RefSeq" id="WP_173338114.1">
    <property type="nucleotide sequence ID" value="NC_004193.1"/>
</dbReference>
<dbReference type="SMR" id="Q8ER53"/>
<dbReference type="STRING" id="221109.gene:10733702"/>
<dbReference type="KEGG" id="oih:OB1462"/>
<dbReference type="eggNOG" id="COG0275">
    <property type="taxonomic scope" value="Bacteria"/>
</dbReference>
<dbReference type="HOGENOM" id="CLU_038422_2_0_9"/>
<dbReference type="PhylomeDB" id="Q8ER53"/>
<dbReference type="Proteomes" id="UP000000822">
    <property type="component" value="Chromosome"/>
</dbReference>
<dbReference type="GO" id="GO:0005737">
    <property type="term" value="C:cytoplasm"/>
    <property type="evidence" value="ECO:0007669"/>
    <property type="project" value="UniProtKB-SubCell"/>
</dbReference>
<dbReference type="GO" id="GO:0071424">
    <property type="term" value="F:rRNA (cytosine-N4-)-methyltransferase activity"/>
    <property type="evidence" value="ECO:0007669"/>
    <property type="project" value="UniProtKB-UniRule"/>
</dbReference>
<dbReference type="GO" id="GO:0070475">
    <property type="term" value="P:rRNA base methylation"/>
    <property type="evidence" value="ECO:0007669"/>
    <property type="project" value="UniProtKB-UniRule"/>
</dbReference>
<dbReference type="FunFam" id="1.10.150.170:FF:000001">
    <property type="entry name" value="Ribosomal RNA small subunit methyltransferase H"/>
    <property type="match status" value="1"/>
</dbReference>
<dbReference type="Gene3D" id="1.10.150.170">
    <property type="entry name" value="Putative methyltransferase TM0872, insert domain"/>
    <property type="match status" value="1"/>
</dbReference>
<dbReference type="Gene3D" id="3.40.50.150">
    <property type="entry name" value="Vaccinia Virus protein VP39"/>
    <property type="match status" value="1"/>
</dbReference>
<dbReference type="HAMAP" id="MF_01007">
    <property type="entry name" value="16SrRNA_methyltr_H"/>
    <property type="match status" value="1"/>
</dbReference>
<dbReference type="InterPro" id="IPR002903">
    <property type="entry name" value="RsmH"/>
</dbReference>
<dbReference type="InterPro" id="IPR023397">
    <property type="entry name" value="SAM-dep_MeTrfase_MraW_recog"/>
</dbReference>
<dbReference type="InterPro" id="IPR029063">
    <property type="entry name" value="SAM-dependent_MTases_sf"/>
</dbReference>
<dbReference type="NCBIfam" id="TIGR00006">
    <property type="entry name" value="16S rRNA (cytosine(1402)-N(4))-methyltransferase RsmH"/>
    <property type="match status" value="1"/>
</dbReference>
<dbReference type="PANTHER" id="PTHR11265:SF0">
    <property type="entry name" value="12S RRNA N4-METHYLCYTIDINE METHYLTRANSFERASE"/>
    <property type="match status" value="1"/>
</dbReference>
<dbReference type="PANTHER" id="PTHR11265">
    <property type="entry name" value="S-ADENOSYL-METHYLTRANSFERASE MRAW"/>
    <property type="match status" value="1"/>
</dbReference>
<dbReference type="Pfam" id="PF01795">
    <property type="entry name" value="Methyltransf_5"/>
    <property type="match status" value="1"/>
</dbReference>
<dbReference type="PIRSF" id="PIRSF004486">
    <property type="entry name" value="MraW"/>
    <property type="match status" value="1"/>
</dbReference>
<dbReference type="SUPFAM" id="SSF81799">
    <property type="entry name" value="Putative methyltransferase TM0872, insert domain"/>
    <property type="match status" value="1"/>
</dbReference>
<dbReference type="SUPFAM" id="SSF53335">
    <property type="entry name" value="S-adenosyl-L-methionine-dependent methyltransferases"/>
    <property type="match status" value="1"/>
</dbReference>
<accession>Q8ER53</accession>
<evidence type="ECO:0000255" key="1">
    <source>
        <dbReference type="HAMAP-Rule" id="MF_01007"/>
    </source>
</evidence>
<evidence type="ECO:0000305" key="2"/>
<protein>
    <recommendedName>
        <fullName evidence="1">Ribosomal RNA small subunit methyltransferase H</fullName>
        <ecNumber evidence="1">2.1.1.199</ecNumber>
    </recommendedName>
    <alternativeName>
        <fullName evidence="1">16S rRNA m(4)C1402 methyltransferase</fullName>
    </alternativeName>
    <alternativeName>
        <fullName evidence="1">rRNA (cytosine-N(4)-)-methyltransferase RsmH</fullName>
    </alternativeName>
</protein>
<keyword id="KW-0963">Cytoplasm</keyword>
<keyword id="KW-0489">Methyltransferase</keyword>
<keyword id="KW-1185">Reference proteome</keyword>
<keyword id="KW-0698">rRNA processing</keyword>
<keyword id="KW-0949">S-adenosyl-L-methionine</keyword>
<keyword id="KW-0808">Transferase</keyword>
<sequence length="325" mass="37238">MFEHYSVLKEESIKGLAIKPDGIYVDCTTGGGGHSLEIASRLNENGQLFAFDQDKDALAAARDRLSTYADRIVFVQSNFRGLEEQLKKHGIEQVDGILFDLGVSSPQLDRGDRGFSYNHDALLDMRMDQSQHLSAYEVVNEWSYERLVSIFFSYGEEKFSKQIARKIEAYREQQDIKTTHQLVEIIKDAIPAPARRKGGHPAKRIFQALRIAVNDELEVFNNALHQAARLIAVNGRIAVITFHSLEDRICKQAFKKWSTDKPTPRHLPIVPESHQAPFKLVTRKPITADTSELDENRRSRSAKLRVIEKVSEWDHEFTYEEGWRK</sequence>
<comment type="function">
    <text evidence="1">Specifically methylates the N4 position of cytidine in position 1402 (C1402) of 16S rRNA.</text>
</comment>
<comment type="catalytic activity">
    <reaction evidence="1">
        <text>cytidine(1402) in 16S rRNA + S-adenosyl-L-methionine = N(4)-methylcytidine(1402) in 16S rRNA + S-adenosyl-L-homocysteine + H(+)</text>
        <dbReference type="Rhea" id="RHEA:42928"/>
        <dbReference type="Rhea" id="RHEA-COMP:10286"/>
        <dbReference type="Rhea" id="RHEA-COMP:10287"/>
        <dbReference type="ChEBI" id="CHEBI:15378"/>
        <dbReference type="ChEBI" id="CHEBI:57856"/>
        <dbReference type="ChEBI" id="CHEBI:59789"/>
        <dbReference type="ChEBI" id="CHEBI:74506"/>
        <dbReference type="ChEBI" id="CHEBI:82748"/>
        <dbReference type="EC" id="2.1.1.199"/>
    </reaction>
</comment>
<comment type="subcellular location">
    <subcellularLocation>
        <location evidence="1">Cytoplasm</location>
    </subcellularLocation>
</comment>
<comment type="similarity">
    <text evidence="1">Belongs to the methyltransferase superfamily. RsmH family.</text>
</comment>
<comment type="sequence caution" evidence="2">
    <conflict type="erroneous initiation">
        <sequence resource="EMBL-CDS" id="BAC13418"/>
    </conflict>
</comment>
<feature type="chain" id="PRO_0000108674" description="Ribosomal RNA small subunit methyltransferase H">
    <location>
        <begin position="1"/>
        <end position="325"/>
    </location>
</feature>
<feature type="binding site" evidence="1">
    <location>
        <begin position="32"/>
        <end position="34"/>
    </location>
    <ligand>
        <name>S-adenosyl-L-methionine</name>
        <dbReference type="ChEBI" id="CHEBI:59789"/>
    </ligand>
</feature>
<feature type="binding site" evidence="1">
    <location>
        <position position="52"/>
    </location>
    <ligand>
        <name>S-adenosyl-L-methionine</name>
        <dbReference type="ChEBI" id="CHEBI:59789"/>
    </ligand>
</feature>
<feature type="binding site" evidence="1">
    <location>
        <position position="79"/>
    </location>
    <ligand>
        <name>S-adenosyl-L-methionine</name>
        <dbReference type="ChEBI" id="CHEBI:59789"/>
    </ligand>
</feature>
<feature type="binding site" evidence="1">
    <location>
        <position position="100"/>
    </location>
    <ligand>
        <name>S-adenosyl-L-methionine</name>
        <dbReference type="ChEBI" id="CHEBI:59789"/>
    </ligand>
</feature>
<feature type="binding site" evidence="1">
    <location>
        <position position="107"/>
    </location>
    <ligand>
        <name>S-adenosyl-L-methionine</name>
        <dbReference type="ChEBI" id="CHEBI:59789"/>
    </ligand>
</feature>
<organism>
    <name type="scientific">Oceanobacillus iheyensis (strain DSM 14371 / CIP 107618 / JCM 11309 / KCTC 3954 / HTE831)</name>
    <dbReference type="NCBI Taxonomy" id="221109"/>
    <lineage>
        <taxon>Bacteria</taxon>
        <taxon>Bacillati</taxon>
        <taxon>Bacillota</taxon>
        <taxon>Bacilli</taxon>
        <taxon>Bacillales</taxon>
        <taxon>Bacillaceae</taxon>
        <taxon>Oceanobacillus</taxon>
    </lineage>
</organism>